<reference key="1">
    <citation type="journal article" date="2008" name="Genome Res.">
        <title>Comparative genome analysis of Salmonella enteritidis PT4 and Salmonella gallinarum 287/91 provides insights into evolutionary and host adaptation pathways.</title>
        <authorList>
            <person name="Thomson N.R."/>
            <person name="Clayton D.J."/>
            <person name="Windhorst D."/>
            <person name="Vernikos G."/>
            <person name="Davidson S."/>
            <person name="Churcher C."/>
            <person name="Quail M.A."/>
            <person name="Stevens M."/>
            <person name="Jones M.A."/>
            <person name="Watson M."/>
            <person name="Barron A."/>
            <person name="Layton A."/>
            <person name="Pickard D."/>
            <person name="Kingsley R.A."/>
            <person name="Bignell A."/>
            <person name="Clark L."/>
            <person name="Harris B."/>
            <person name="Ormond D."/>
            <person name="Abdellah Z."/>
            <person name="Brooks K."/>
            <person name="Cherevach I."/>
            <person name="Chillingworth T."/>
            <person name="Woodward J."/>
            <person name="Norberczak H."/>
            <person name="Lord A."/>
            <person name="Arrowsmith C."/>
            <person name="Jagels K."/>
            <person name="Moule S."/>
            <person name="Mungall K."/>
            <person name="Saunders M."/>
            <person name="Whitehead S."/>
            <person name="Chabalgoity J.A."/>
            <person name="Maskell D."/>
            <person name="Humphreys T."/>
            <person name="Roberts M."/>
            <person name="Barrow P.A."/>
            <person name="Dougan G."/>
            <person name="Parkhill J."/>
        </authorList>
    </citation>
    <scope>NUCLEOTIDE SEQUENCE [LARGE SCALE GENOMIC DNA]</scope>
    <source>
        <strain>287/91 / NCTC 13346</strain>
    </source>
</reference>
<organism>
    <name type="scientific">Salmonella gallinarum (strain 287/91 / NCTC 13346)</name>
    <dbReference type="NCBI Taxonomy" id="550538"/>
    <lineage>
        <taxon>Bacteria</taxon>
        <taxon>Pseudomonadati</taxon>
        <taxon>Pseudomonadota</taxon>
        <taxon>Gammaproteobacteria</taxon>
        <taxon>Enterobacterales</taxon>
        <taxon>Enterobacteriaceae</taxon>
        <taxon>Salmonella</taxon>
    </lineage>
</organism>
<name>NUOA_SALG2</name>
<feature type="chain" id="PRO_0000362768" description="NADH-quinone oxidoreductase subunit A">
    <location>
        <begin position="1"/>
        <end position="147"/>
    </location>
</feature>
<feature type="transmembrane region" description="Helical" evidence="1">
    <location>
        <begin position="16"/>
        <end position="36"/>
    </location>
</feature>
<feature type="transmembrane region" description="Helical" evidence="1">
    <location>
        <begin position="68"/>
        <end position="88"/>
    </location>
</feature>
<feature type="transmembrane region" description="Helical" evidence="1">
    <location>
        <begin position="97"/>
        <end position="117"/>
    </location>
</feature>
<proteinExistence type="inferred from homology"/>
<gene>
    <name evidence="1" type="primary">nuoA</name>
    <name type="ordered locus">SG2357</name>
</gene>
<comment type="function">
    <text evidence="1">NDH-1 shuttles electrons from NADH, via FMN and iron-sulfur (Fe-S) centers, to quinones in the respiratory chain. The immediate electron acceptor for the enzyme in this species is believed to be ubiquinone. Couples the redox reaction to proton translocation (for every two electrons transferred, four hydrogen ions are translocated across the cytoplasmic membrane), and thus conserves the redox energy in a proton gradient.</text>
</comment>
<comment type="catalytic activity">
    <reaction evidence="1">
        <text>a quinone + NADH + 5 H(+)(in) = a quinol + NAD(+) + 4 H(+)(out)</text>
        <dbReference type="Rhea" id="RHEA:57888"/>
        <dbReference type="ChEBI" id="CHEBI:15378"/>
        <dbReference type="ChEBI" id="CHEBI:24646"/>
        <dbReference type="ChEBI" id="CHEBI:57540"/>
        <dbReference type="ChEBI" id="CHEBI:57945"/>
        <dbReference type="ChEBI" id="CHEBI:132124"/>
    </reaction>
</comment>
<comment type="subunit">
    <text evidence="1">NDH-1 is composed of 13 different subunits. Subunits NuoA, H, J, K, L, M, N constitute the membrane sector of the complex.</text>
</comment>
<comment type="subcellular location">
    <subcellularLocation>
        <location evidence="1">Cell inner membrane</location>
        <topology evidence="1">Multi-pass membrane protein</topology>
    </subcellularLocation>
</comment>
<comment type="similarity">
    <text evidence="1">Belongs to the complex I subunit 3 family.</text>
</comment>
<evidence type="ECO:0000255" key="1">
    <source>
        <dbReference type="HAMAP-Rule" id="MF_01394"/>
    </source>
</evidence>
<accession>B5RCF3</accession>
<dbReference type="EC" id="7.1.1.-" evidence="1"/>
<dbReference type="EMBL" id="AM933173">
    <property type="protein sequence ID" value="CAR38187.1"/>
    <property type="molecule type" value="Genomic_DNA"/>
</dbReference>
<dbReference type="RefSeq" id="WP_000062993.1">
    <property type="nucleotide sequence ID" value="NC_011274.1"/>
</dbReference>
<dbReference type="SMR" id="B5RCF3"/>
<dbReference type="GeneID" id="66756777"/>
<dbReference type="KEGG" id="seg:SG2357"/>
<dbReference type="HOGENOM" id="CLU_119549_2_0_6"/>
<dbReference type="Proteomes" id="UP000008321">
    <property type="component" value="Chromosome"/>
</dbReference>
<dbReference type="GO" id="GO:0030964">
    <property type="term" value="C:NADH dehydrogenase complex"/>
    <property type="evidence" value="ECO:0007669"/>
    <property type="project" value="TreeGrafter"/>
</dbReference>
<dbReference type="GO" id="GO:0005886">
    <property type="term" value="C:plasma membrane"/>
    <property type="evidence" value="ECO:0007669"/>
    <property type="project" value="UniProtKB-SubCell"/>
</dbReference>
<dbReference type="GO" id="GO:0008137">
    <property type="term" value="F:NADH dehydrogenase (ubiquinone) activity"/>
    <property type="evidence" value="ECO:0007669"/>
    <property type="project" value="InterPro"/>
</dbReference>
<dbReference type="GO" id="GO:0050136">
    <property type="term" value="F:NADH:ubiquinone reductase (non-electrogenic) activity"/>
    <property type="evidence" value="ECO:0007669"/>
    <property type="project" value="UniProtKB-UniRule"/>
</dbReference>
<dbReference type="GO" id="GO:0048038">
    <property type="term" value="F:quinone binding"/>
    <property type="evidence" value="ECO:0007669"/>
    <property type="project" value="UniProtKB-KW"/>
</dbReference>
<dbReference type="FunFam" id="1.20.58.1610:FF:000003">
    <property type="entry name" value="NADH-quinone oxidoreductase subunit A"/>
    <property type="match status" value="1"/>
</dbReference>
<dbReference type="Gene3D" id="1.20.58.1610">
    <property type="entry name" value="NADH:ubiquinone/plastoquinone oxidoreductase, chain 3"/>
    <property type="match status" value="1"/>
</dbReference>
<dbReference type="HAMAP" id="MF_01394">
    <property type="entry name" value="NDH1_NuoA"/>
    <property type="match status" value="1"/>
</dbReference>
<dbReference type="InterPro" id="IPR023043">
    <property type="entry name" value="NAD(P)H_OxRDtase_bac/plastid"/>
</dbReference>
<dbReference type="InterPro" id="IPR000440">
    <property type="entry name" value="NADH_UbQ/plastoQ_OxRdtase_su3"/>
</dbReference>
<dbReference type="InterPro" id="IPR038430">
    <property type="entry name" value="NDAH_ubi_oxred_su3_sf"/>
</dbReference>
<dbReference type="PANTHER" id="PTHR11058:SF21">
    <property type="entry name" value="NADH-QUINONE OXIDOREDUCTASE SUBUNIT A"/>
    <property type="match status" value="1"/>
</dbReference>
<dbReference type="PANTHER" id="PTHR11058">
    <property type="entry name" value="NADH-UBIQUINONE OXIDOREDUCTASE CHAIN 3"/>
    <property type="match status" value="1"/>
</dbReference>
<dbReference type="Pfam" id="PF00507">
    <property type="entry name" value="Oxidored_q4"/>
    <property type="match status" value="1"/>
</dbReference>
<keyword id="KW-0997">Cell inner membrane</keyword>
<keyword id="KW-1003">Cell membrane</keyword>
<keyword id="KW-0472">Membrane</keyword>
<keyword id="KW-0520">NAD</keyword>
<keyword id="KW-0874">Quinone</keyword>
<keyword id="KW-1278">Translocase</keyword>
<keyword id="KW-0812">Transmembrane</keyword>
<keyword id="KW-1133">Transmembrane helix</keyword>
<keyword id="KW-0813">Transport</keyword>
<keyword id="KW-0830">Ubiquinone</keyword>
<sequence length="147" mass="16493">MSMSTSTEVIAHHWAFAIFLIVAIGLCCLMLVGGWFLGGRARARHKNVPFESGIDSVGTARLRLSAKFYLVAMFFVIFDVEALYLFAWSTSIRESGWVGFVEAAIFIFVLLAGLVYLARIGALDWTPARSRRERMNPETNSIANRQR</sequence>
<protein>
    <recommendedName>
        <fullName evidence="1">NADH-quinone oxidoreductase subunit A</fullName>
        <ecNumber evidence="1">7.1.1.-</ecNumber>
    </recommendedName>
    <alternativeName>
        <fullName evidence="1">NADH dehydrogenase I subunit A</fullName>
    </alternativeName>
    <alternativeName>
        <fullName evidence="1">NDH-1 subunit A</fullName>
    </alternativeName>
    <alternativeName>
        <fullName evidence="1">NUO1</fullName>
    </alternativeName>
</protein>